<dbReference type="EC" id="3.6.5.3" evidence="2"/>
<dbReference type="EMBL" id="AP009180">
    <property type="protein sequence ID" value="BAF35188.1"/>
    <property type="molecule type" value="Genomic_DNA"/>
</dbReference>
<dbReference type="RefSeq" id="WP_011672380.1">
    <property type="nucleotide sequence ID" value="NC_008512.1"/>
</dbReference>
<dbReference type="SMR" id="Q05FI3"/>
<dbReference type="STRING" id="387662.CRP_157"/>
<dbReference type="KEGG" id="crp:CRP_157"/>
<dbReference type="HOGENOM" id="CLU_007265_0_1_6"/>
<dbReference type="OrthoDB" id="9803139at2"/>
<dbReference type="Proteomes" id="UP000000777">
    <property type="component" value="Chromosome"/>
</dbReference>
<dbReference type="GO" id="GO:0005829">
    <property type="term" value="C:cytosol"/>
    <property type="evidence" value="ECO:0007669"/>
    <property type="project" value="TreeGrafter"/>
</dbReference>
<dbReference type="GO" id="GO:0005525">
    <property type="term" value="F:GTP binding"/>
    <property type="evidence" value="ECO:0007669"/>
    <property type="project" value="UniProtKB-UniRule"/>
</dbReference>
<dbReference type="GO" id="GO:0003924">
    <property type="term" value="F:GTPase activity"/>
    <property type="evidence" value="ECO:0007669"/>
    <property type="project" value="InterPro"/>
</dbReference>
<dbReference type="GO" id="GO:0097216">
    <property type="term" value="F:guanosine tetraphosphate binding"/>
    <property type="evidence" value="ECO:0007669"/>
    <property type="project" value="UniProtKB-ARBA"/>
</dbReference>
<dbReference type="GO" id="GO:0003746">
    <property type="term" value="F:translation elongation factor activity"/>
    <property type="evidence" value="ECO:0007669"/>
    <property type="project" value="UniProtKB-UniRule"/>
</dbReference>
<dbReference type="CDD" id="cd01884">
    <property type="entry name" value="EF_Tu"/>
    <property type="match status" value="1"/>
</dbReference>
<dbReference type="CDD" id="cd03697">
    <property type="entry name" value="EFTU_II"/>
    <property type="match status" value="1"/>
</dbReference>
<dbReference type="CDD" id="cd03707">
    <property type="entry name" value="EFTU_III"/>
    <property type="match status" value="1"/>
</dbReference>
<dbReference type="FunFam" id="2.40.30.10:FF:000001">
    <property type="entry name" value="Elongation factor Tu"/>
    <property type="match status" value="1"/>
</dbReference>
<dbReference type="FunFam" id="3.40.50.300:FF:000003">
    <property type="entry name" value="Elongation factor Tu"/>
    <property type="match status" value="1"/>
</dbReference>
<dbReference type="Gene3D" id="3.40.50.300">
    <property type="entry name" value="P-loop containing nucleotide triphosphate hydrolases"/>
    <property type="match status" value="1"/>
</dbReference>
<dbReference type="Gene3D" id="2.40.30.10">
    <property type="entry name" value="Translation factors"/>
    <property type="match status" value="2"/>
</dbReference>
<dbReference type="HAMAP" id="MF_00118_B">
    <property type="entry name" value="EF_Tu_B"/>
    <property type="match status" value="1"/>
</dbReference>
<dbReference type="InterPro" id="IPR041709">
    <property type="entry name" value="EF-Tu_GTP-bd"/>
</dbReference>
<dbReference type="InterPro" id="IPR050055">
    <property type="entry name" value="EF-Tu_GTPase"/>
</dbReference>
<dbReference type="InterPro" id="IPR004161">
    <property type="entry name" value="EFTu-like_2"/>
</dbReference>
<dbReference type="InterPro" id="IPR033720">
    <property type="entry name" value="EFTU_2"/>
</dbReference>
<dbReference type="InterPro" id="IPR031157">
    <property type="entry name" value="G_TR_CS"/>
</dbReference>
<dbReference type="InterPro" id="IPR027417">
    <property type="entry name" value="P-loop_NTPase"/>
</dbReference>
<dbReference type="InterPro" id="IPR005225">
    <property type="entry name" value="Small_GTP-bd"/>
</dbReference>
<dbReference type="InterPro" id="IPR000795">
    <property type="entry name" value="T_Tr_GTP-bd_dom"/>
</dbReference>
<dbReference type="InterPro" id="IPR009000">
    <property type="entry name" value="Transl_B-barrel_sf"/>
</dbReference>
<dbReference type="InterPro" id="IPR009001">
    <property type="entry name" value="Transl_elong_EF1A/Init_IF2_C"/>
</dbReference>
<dbReference type="InterPro" id="IPR004541">
    <property type="entry name" value="Transl_elong_EFTu/EF1A_bac/org"/>
</dbReference>
<dbReference type="InterPro" id="IPR004160">
    <property type="entry name" value="Transl_elong_EFTu/EF1A_C"/>
</dbReference>
<dbReference type="NCBIfam" id="TIGR00485">
    <property type="entry name" value="EF-Tu"/>
    <property type="match status" value="1"/>
</dbReference>
<dbReference type="NCBIfam" id="NF000766">
    <property type="entry name" value="PRK00049.1"/>
    <property type="match status" value="1"/>
</dbReference>
<dbReference type="NCBIfam" id="NF009372">
    <property type="entry name" value="PRK12735.1"/>
    <property type="match status" value="1"/>
</dbReference>
<dbReference type="NCBIfam" id="NF009373">
    <property type="entry name" value="PRK12736.1"/>
    <property type="match status" value="1"/>
</dbReference>
<dbReference type="NCBIfam" id="TIGR00231">
    <property type="entry name" value="small_GTP"/>
    <property type="match status" value="1"/>
</dbReference>
<dbReference type="PANTHER" id="PTHR43721:SF22">
    <property type="entry name" value="ELONGATION FACTOR TU, MITOCHONDRIAL"/>
    <property type="match status" value="1"/>
</dbReference>
<dbReference type="PANTHER" id="PTHR43721">
    <property type="entry name" value="ELONGATION FACTOR TU-RELATED"/>
    <property type="match status" value="1"/>
</dbReference>
<dbReference type="Pfam" id="PF00009">
    <property type="entry name" value="GTP_EFTU"/>
    <property type="match status" value="1"/>
</dbReference>
<dbReference type="Pfam" id="PF03144">
    <property type="entry name" value="GTP_EFTU_D2"/>
    <property type="match status" value="1"/>
</dbReference>
<dbReference type="Pfam" id="PF03143">
    <property type="entry name" value="GTP_EFTU_D3"/>
    <property type="match status" value="1"/>
</dbReference>
<dbReference type="PRINTS" id="PR00315">
    <property type="entry name" value="ELONGATNFCT"/>
</dbReference>
<dbReference type="SUPFAM" id="SSF50465">
    <property type="entry name" value="EF-Tu/eEF-1alpha/eIF2-gamma C-terminal domain"/>
    <property type="match status" value="1"/>
</dbReference>
<dbReference type="SUPFAM" id="SSF52540">
    <property type="entry name" value="P-loop containing nucleoside triphosphate hydrolases"/>
    <property type="match status" value="1"/>
</dbReference>
<dbReference type="SUPFAM" id="SSF50447">
    <property type="entry name" value="Translation proteins"/>
    <property type="match status" value="1"/>
</dbReference>
<dbReference type="PROSITE" id="PS00301">
    <property type="entry name" value="G_TR_1"/>
    <property type="match status" value="1"/>
</dbReference>
<dbReference type="PROSITE" id="PS51722">
    <property type="entry name" value="G_TR_2"/>
    <property type="match status" value="1"/>
</dbReference>
<accession>Q05FI3</accession>
<evidence type="ECO:0000250" key="1"/>
<evidence type="ECO:0000255" key="2">
    <source>
        <dbReference type="HAMAP-Rule" id="MF_00118"/>
    </source>
</evidence>
<keyword id="KW-0963">Cytoplasm</keyword>
<keyword id="KW-0251">Elongation factor</keyword>
<keyword id="KW-0342">GTP-binding</keyword>
<keyword id="KW-0378">Hydrolase</keyword>
<keyword id="KW-0460">Magnesium</keyword>
<keyword id="KW-0479">Metal-binding</keyword>
<keyword id="KW-0547">Nucleotide-binding</keyword>
<keyword id="KW-0648">Protein biosynthesis</keyword>
<name>EFTU_CARRP</name>
<proteinExistence type="inferred from homology"/>
<gene>
    <name evidence="2" type="primary">tuf</name>
    <name type="ordered locus">CRP_157</name>
</gene>
<comment type="function">
    <text evidence="2">GTP hydrolase that promotes the GTP-dependent binding of aminoacyl-tRNA to the A-site of ribosomes during protein biosynthesis.</text>
</comment>
<comment type="catalytic activity">
    <reaction evidence="2">
        <text>GTP + H2O = GDP + phosphate + H(+)</text>
        <dbReference type="Rhea" id="RHEA:19669"/>
        <dbReference type="ChEBI" id="CHEBI:15377"/>
        <dbReference type="ChEBI" id="CHEBI:15378"/>
        <dbReference type="ChEBI" id="CHEBI:37565"/>
        <dbReference type="ChEBI" id="CHEBI:43474"/>
        <dbReference type="ChEBI" id="CHEBI:58189"/>
        <dbReference type="EC" id="3.6.5.3"/>
    </reaction>
    <physiologicalReaction direction="left-to-right" evidence="2">
        <dbReference type="Rhea" id="RHEA:19670"/>
    </physiologicalReaction>
</comment>
<comment type="subunit">
    <text evidence="2">Monomer.</text>
</comment>
<comment type="subcellular location">
    <subcellularLocation>
        <location evidence="2">Cytoplasm</location>
    </subcellularLocation>
</comment>
<comment type="similarity">
    <text evidence="2">Belongs to the TRAFAC class translation factor GTPase superfamily. Classic translation factor GTPase family. EF-Tu/EF-1A subfamily.</text>
</comment>
<sequence length="398" mass="44125">MAKKKFNREKIHLNVGTIGHVDHGKTTLTAALTKVSSDLYGSECRPFDSIDNAPEERERGITISTSHVEYESETKHYAHVDCPGHADYIKNMITGAAQMDGAILVCSAVDGPMPQTREHILLARQVGVPTIIVYLNKADCVKDKELLELVEMEIRELLTEYDFDGNNTKIIIGSALLALENKDDNQLGTSSIIKLLEILDKNIPVPNRIIDKPFLMPIEDVFSISGRGTVVTGKIERGIIKTGEEIEIVGFKETIKTIVIGIEMFKKTLDEGFAGENVGILLRSIKREEVERGQVLIKSGTIKPHTNFICEVYILSKEEGGRHTPFFKGYKPQFYFRTTDITGICDLPKNIEMVMPGDNVKLIVKLLSSIAIEKGLRFAIREGGKTVGAGIITEVLND</sequence>
<reference key="1">
    <citation type="journal article" date="2006" name="Science">
        <title>The 160-kilobase genome of the bacterial endosymbiont Carsonella.</title>
        <authorList>
            <person name="Nakabachi A."/>
            <person name="Yamashita A."/>
            <person name="Toh H."/>
            <person name="Ishikawa H."/>
            <person name="Dunbar H.E."/>
            <person name="Moran N.A."/>
            <person name="Hattori M."/>
        </authorList>
    </citation>
    <scope>NUCLEOTIDE SEQUENCE [LARGE SCALE GENOMIC DNA]</scope>
    <source>
        <strain>PV</strain>
    </source>
</reference>
<protein>
    <recommendedName>
        <fullName evidence="2">Elongation factor Tu</fullName>
        <shortName evidence="2">EF-Tu</shortName>
        <ecNumber evidence="2">3.6.5.3</ecNumber>
    </recommendedName>
</protein>
<feature type="chain" id="PRO_1000015632" description="Elongation factor Tu">
    <location>
        <begin position="1"/>
        <end position="398"/>
    </location>
</feature>
<feature type="domain" description="tr-type G">
    <location>
        <begin position="10"/>
        <end position="207"/>
    </location>
</feature>
<feature type="region of interest" description="G1" evidence="1">
    <location>
        <begin position="19"/>
        <end position="26"/>
    </location>
</feature>
<feature type="region of interest" description="G2" evidence="1">
    <location>
        <begin position="60"/>
        <end position="64"/>
    </location>
</feature>
<feature type="region of interest" description="G3" evidence="1">
    <location>
        <begin position="81"/>
        <end position="84"/>
    </location>
</feature>
<feature type="region of interest" description="G4" evidence="1">
    <location>
        <begin position="136"/>
        <end position="139"/>
    </location>
</feature>
<feature type="region of interest" description="G5" evidence="1">
    <location>
        <begin position="174"/>
        <end position="176"/>
    </location>
</feature>
<feature type="binding site" evidence="2">
    <location>
        <begin position="19"/>
        <end position="26"/>
    </location>
    <ligand>
        <name>GTP</name>
        <dbReference type="ChEBI" id="CHEBI:37565"/>
    </ligand>
</feature>
<feature type="binding site" evidence="2">
    <location>
        <position position="26"/>
    </location>
    <ligand>
        <name>Mg(2+)</name>
        <dbReference type="ChEBI" id="CHEBI:18420"/>
    </ligand>
</feature>
<feature type="binding site" evidence="2">
    <location>
        <begin position="81"/>
        <end position="85"/>
    </location>
    <ligand>
        <name>GTP</name>
        <dbReference type="ChEBI" id="CHEBI:37565"/>
    </ligand>
</feature>
<feature type="binding site" evidence="2">
    <location>
        <begin position="136"/>
        <end position="139"/>
    </location>
    <ligand>
        <name>GTP</name>
        <dbReference type="ChEBI" id="CHEBI:37565"/>
    </ligand>
</feature>
<organism>
    <name type="scientific">Carsonella ruddii (strain PV)</name>
    <dbReference type="NCBI Taxonomy" id="387662"/>
    <lineage>
        <taxon>Bacteria</taxon>
        <taxon>Pseudomonadati</taxon>
        <taxon>Pseudomonadota</taxon>
        <taxon>Gammaproteobacteria</taxon>
        <taxon>Oceanospirillales</taxon>
        <taxon>Halomonadaceae</taxon>
        <taxon>Zymobacter group</taxon>
        <taxon>Candidatus Carsonella</taxon>
    </lineage>
</organism>